<protein>
    <recommendedName>
        <fullName evidence="1">Small ribosomal subunit protein bS18</fullName>
    </recommendedName>
    <alternativeName>
        <fullName evidence="3">30S ribosomal protein S18</fullName>
    </alternativeName>
</protein>
<organism>
    <name type="scientific">Brucella suis (strain ATCC 23445 / NCTC 10510)</name>
    <dbReference type="NCBI Taxonomy" id="470137"/>
    <lineage>
        <taxon>Bacteria</taxon>
        <taxon>Pseudomonadati</taxon>
        <taxon>Pseudomonadota</taxon>
        <taxon>Alphaproteobacteria</taxon>
        <taxon>Hyphomicrobiales</taxon>
        <taxon>Brucellaceae</taxon>
        <taxon>Brucella/Ochrobactrum group</taxon>
        <taxon>Brucella</taxon>
    </lineage>
</organism>
<comment type="function">
    <text evidence="1">Binds as a heterodimer with protein bS6 to the central domain of the 16S rRNA, where it helps stabilize the platform of the 30S subunit.</text>
</comment>
<comment type="subunit">
    <text evidence="1">Part of the 30S ribosomal subunit. Forms a tight heterodimer with protein bS6.</text>
</comment>
<comment type="similarity">
    <text evidence="1">Belongs to the bacterial ribosomal protein bS18 family.</text>
</comment>
<gene>
    <name evidence="1" type="primary">rpsR</name>
    <name type="ordered locus">BSUIS_A0480</name>
</gene>
<proteinExistence type="inferred from homology"/>
<dbReference type="EMBL" id="CP000911">
    <property type="protein sequence ID" value="ABY37568.1"/>
    <property type="molecule type" value="Genomic_DNA"/>
</dbReference>
<dbReference type="RefSeq" id="WP_006072253.1">
    <property type="nucleotide sequence ID" value="NC_010169.1"/>
</dbReference>
<dbReference type="SMR" id="B0CKD8"/>
<dbReference type="KEGG" id="bmt:BSUIS_A0480"/>
<dbReference type="HOGENOM" id="CLU_148710_2_2_5"/>
<dbReference type="Proteomes" id="UP000008545">
    <property type="component" value="Chromosome I"/>
</dbReference>
<dbReference type="GO" id="GO:0022627">
    <property type="term" value="C:cytosolic small ribosomal subunit"/>
    <property type="evidence" value="ECO:0007669"/>
    <property type="project" value="TreeGrafter"/>
</dbReference>
<dbReference type="GO" id="GO:0070181">
    <property type="term" value="F:small ribosomal subunit rRNA binding"/>
    <property type="evidence" value="ECO:0007669"/>
    <property type="project" value="TreeGrafter"/>
</dbReference>
<dbReference type="GO" id="GO:0003735">
    <property type="term" value="F:structural constituent of ribosome"/>
    <property type="evidence" value="ECO:0007669"/>
    <property type="project" value="InterPro"/>
</dbReference>
<dbReference type="GO" id="GO:0006412">
    <property type="term" value="P:translation"/>
    <property type="evidence" value="ECO:0007669"/>
    <property type="project" value="UniProtKB-UniRule"/>
</dbReference>
<dbReference type="Gene3D" id="4.10.640.10">
    <property type="entry name" value="Ribosomal protein S18"/>
    <property type="match status" value="1"/>
</dbReference>
<dbReference type="HAMAP" id="MF_00270">
    <property type="entry name" value="Ribosomal_bS18"/>
    <property type="match status" value="1"/>
</dbReference>
<dbReference type="InterPro" id="IPR001648">
    <property type="entry name" value="Ribosomal_bS18"/>
</dbReference>
<dbReference type="InterPro" id="IPR018275">
    <property type="entry name" value="Ribosomal_bS18_CS"/>
</dbReference>
<dbReference type="InterPro" id="IPR036870">
    <property type="entry name" value="Ribosomal_bS18_sf"/>
</dbReference>
<dbReference type="NCBIfam" id="TIGR00165">
    <property type="entry name" value="S18"/>
    <property type="match status" value="1"/>
</dbReference>
<dbReference type="PANTHER" id="PTHR13479">
    <property type="entry name" value="30S RIBOSOMAL PROTEIN S18"/>
    <property type="match status" value="1"/>
</dbReference>
<dbReference type="PANTHER" id="PTHR13479:SF40">
    <property type="entry name" value="SMALL RIBOSOMAL SUBUNIT PROTEIN BS18M"/>
    <property type="match status" value="1"/>
</dbReference>
<dbReference type="Pfam" id="PF01084">
    <property type="entry name" value="Ribosomal_S18"/>
    <property type="match status" value="1"/>
</dbReference>
<dbReference type="PRINTS" id="PR00974">
    <property type="entry name" value="RIBOSOMALS18"/>
</dbReference>
<dbReference type="SUPFAM" id="SSF46911">
    <property type="entry name" value="Ribosomal protein S18"/>
    <property type="match status" value="1"/>
</dbReference>
<dbReference type="PROSITE" id="PS00057">
    <property type="entry name" value="RIBOSOMAL_S18"/>
    <property type="match status" value="1"/>
</dbReference>
<feature type="chain" id="PRO_1000078692" description="Small ribosomal subunit protein bS18">
    <location>
        <begin position="1"/>
        <end position="82"/>
    </location>
</feature>
<feature type="region of interest" description="Disordered" evidence="2">
    <location>
        <begin position="1"/>
        <end position="20"/>
    </location>
</feature>
<sequence length="82" mass="9543">MVDINQIPTRRPFHRRHKTCPFSGANAPKIDYKDVKLLQRYISERGKIVPSRITAVSQKKQRELAKAIKRARFLGLLPYVVK</sequence>
<name>RS18_BRUSI</name>
<reference key="1">
    <citation type="submission" date="2007-12" db="EMBL/GenBank/DDBJ databases">
        <title>Brucella suis ATCC 23445 whole genome shotgun sequencing project.</title>
        <authorList>
            <person name="Setubal J.C."/>
            <person name="Bowns C."/>
            <person name="Boyle S."/>
            <person name="Crasta O.R."/>
            <person name="Czar M.J."/>
            <person name="Dharmanolla C."/>
            <person name="Gillespie J.J."/>
            <person name="Kenyon R.W."/>
            <person name="Lu J."/>
            <person name="Mane S."/>
            <person name="Mohapatra S."/>
            <person name="Nagrani S."/>
            <person name="Purkayastha A."/>
            <person name="Rajasimha H.K."/>
            <person name="Shallom J.M."/>
            <person name="Shallom S."/>
            <person name="Shukla M."/>
            <person name="Snyder E.E."/>
            <person name="Sobral B.W."/>
            <person name="Wattam A.R."/>
            <person name="Will R."/>
            <person name="Williams K."/>
            <person name="Yoo H."/>
            <person name="Bruce D."/>
            <person name="Detter C."/>
            <person name="Munk C."/>
            <person name="Brettin T.S."/>
        </authorList>
    </citation>
    <scope>NUCLEOTIDE SEQUENCE [LARGE SCALE GENOMIC DNA]</scope>
    <source>
        <strain>ATCC 23445 / NCTC 10510</strain>
    </source>
</reference>
<accession>B0CKD8</accession>
<evidence type="ECO:0000255" key="1">
    <source>
        <dbReference type="HAMAP-Rule" id="MF_00270"/>
    </source>
</evidence>
<evidence type="ECO:0000256" key="2">
    <source>
        <dbReference type="SAM" id="MobiDB-lite"/>
    </source>
</evidence>
<evidence type="ECO:0000305" key="3"/>
<keyword id="KW-0687">Ribonucleoprotein</keyword>
<keyword id="KW-0689">Ribosomal protein</keyword>
<keyword id="KW-0694">RNA-binding</keyword>
<keyword id="KW-0699">rRNA-binding</keyword>